<dbReference type="EC" id="3.1.-.-" evidence="1"/>
<dbReference type="EC" id="3.6.4.-" evidence="1"/>
<dbReference type="EMBL" id="AP009153">
    <property type="protein sequence ID" value="BAH38934.1"/>
    <property type="molecule type" value="Genomic_DNA"/>
</dbReference>
<dbReference type="RefSeq" id="WP_012683381.1">
    <property type="nucleotide sequence ID" value="NC_012489.1"/>
</dbReference>
<dbReference type="SMR" id="C1A4A9"/>
<dbReference type="STRING" id="379066.GAU_1892"/>
<dbReference type="KEGG" id="gau:GAU_1892"/>
<dbReference type="eggNOG" id="COG1193">
    <property type="taxonomic scope" value="Bacteria"/>
</dbReference>
<dbReference type="HOGENOM" id="CLU_011252_2_1_0"/>
<dbReference type="OrthoDB" id="9808166at2"/>
<dbReference type="Proteomes" id="UP000002209">
    <property type="component" value="Chromosome"/>
</dbReference>
<dbReference type="GO" id="GO:0005524">
    <property type="term" value="F:ATP binding"/>
    <property type="evidence" value="ECO:0007669"/>
    <property type="project" value="UniProtKB-UniRule"/>
</dbReference>
<dbReference type="GO" id="GO:0016887">
    <property type="term" value="F:ATP hydrolysis activity"/>
    <property type="evidence" value="ECO:0007669"/>
    <property type="project" value="InterPro"/>
</dbReference>
<dbReference type="GO" id="GO:0140664">
    <property type="term" value="F:ATP-dependent DNA damage sensor activity"/>
    <property type="evidence" value="ECO:0007669"/>
    <property type="project" value="InterPro"/>
</dbReference>
<dbReference type="GO" id="GO:0004519">
    <property type="term" value="F:endonuclease activity"/>
    <property type="evidence" value="ECO:0007669"/>
    <property type="project" value="UniProtKB-UniRule"/>
</dbReference>
<dbReference type="GO" id="GO:0030983">
    <property type="term" value="F:mismatched DNA binding"/>
    <property type="evidence" value="ECO:0007669"/>
    <property type="project" value="InterPro"/>
</dbReference>
<dbReference type="GO" id="GO:0043023">
    <property type="term" value="F:ribosomal large subunit binding"/>
    <property type="evidence" value="ECO:0007669"/>
    <property type="project" value="UniProtKB-UniRule"/>
</dbReference>
<dbReference type="GO" id="GO:0019843">
    <property type="term" value="F:rRNA binding"/>
    <property type="evidence" value="ECO:0007669"/>
    <property type="project" value="UniProtKB-UniRule"/>
</dbReference>
<dbReference type="GO" id="GO:0006298">
    <property type="term" value="P:mismatch repair"/>
    <property type="evidence" value="ECO:0007669"/>
    <property type="project" value="InterPro"/>
</dbReference>
<dbReference type="GO" id="GO:0045910">
    <property type="term" value="P:negative regulation of DNA recombination"/>
    <property type="evidence" value="ECO:0007669"/>
    <property type="project" value="InterPro"/>
</dbReference>
<dbReference type="GO" id="GO:0072344">
    <property type="term" value="P:rescue of stalled ribosome"/>
    <property type="evidence" value="ECO:0007669"/>
    <property type="project" value="UniProtKB-UniRule"/>
</dbReference>
<dbReference type="FunFam" id="3.40.50.300:FF:000830">
    <property type="entry name" value="Endonuclease MutS2"/>
    <property type="match status" value="1"/>
</dbReference>
<dbReference type="Gene3D" id="3.30.1370.110">
    <property type="match status" value="1"/>
</dbReference>
<dbReference type="Gene3D" id="3.40.50.300">
    <property type="entry name" value="P-loop containing nucleotide triphosphate hydrolases"/>
    <property type="match status" value="1"/>
</dbReference>
<dbReference type="HAMAP" id="MF_00092">
    <property type="entry name" value="MutS2"/>
    <property type="match status" value="1"/>
</dbReference>
<dbReference type="InterPro" id="IPR000432">
    <property type="entry name" value="DNA_mismatch_repair_MutS_C"/>
</dbReference>
<dbReference type="InterPro" id="IPR007696">
    <property type="entry name" value="DNA_mismatch_repair_MutS_core"/>
</dbReference>
<dbReference type="InterPro" id="IPR036187">
    <property type="entry name" value="DNA_mismatch_repair_MutS_sf"/>
</dbReference>
<dbReference type="InterPro" id="IPR046893">
    <property type="entry name" value="MSSS"/>
</dbReference>
<dbReference type="InterPro" id="IPR045076">
    <property type="entry name" value="MutS"/>
</dbReference>
<dbReference type="InterPro" id="IPR005747">
    <property type="entry name" value="MutS2"/>
</dbReference>
<dbReference type="InterPro" id="IPR027417">
    <property type="entry name" value="P-loop_NTPase"/>
</dbReference>
<dbReference type="InterPro" id="IPR002625">
    <property type="entry name" value="Smr_dom"/>
</dbReference>
<dbReference type="InterPro" id="IPR036063">
    <property type="entry name" value="Smr_dom_sf"/>
</dbReference>
<dbReference type="NCBIfam" id="TIGR01069">
    <property type="entry name" value="mutS2"/>
    <property type="match status" value="1"/>
</dbReference>
<dbReference type="PANTHER" id="PTHR48466:SF2">
    <property type="entry name" value="OS10G0509000 PROTEIN"/>
    <property type="match status" value="1"/>
</dbReference>
<dbReference type="PANTHER" id="PTHR48466">
    <property type="entry name" value="OS10G0509000 PROTEIN-RELATED"/>
    <property type="match status" value="1"/>
</dbReference>
<dbReference type="Pfam" id="PF20297">
    <property type="entry name" value="MSSS"/>
    <property type="match status" value="1"/>
</dbReference>
<dbReference type="Pfam" id="PF00488">
    <property type="entry name" value="MutS_V"/>
    <property type="match status" value="1"/>
</dbReference>
<dbReference type="Pfam" id="PF01713">
    <property type="entry name" value="Smr"/>
    <property type="match status" value="1"/>
</dbReference>
<dbReference type="PIRSF" id="PIRSF005814">
    <property type="entry name" value="MutS_YshD"/>
    <property type="match status" value="1"/>
</dbReference>
<dbReference type="SMART" id="SM00534">
    <property type="entry name" value="MUTSac"/>
    <property type="match status" value="1"/>
</dbReference>
<dbReference type="SMART" id="SM00533">
    <property type="entry name" value="MUTSd"/>
    <property type="match status" value="1"/>
</dbReference>
<dbReference type="SMART" id="SM00463">
    <property type="entry name" value="SMR"/>
    <property type="match status" value="1"/>
</dbReference>
<dbReference type="SUPFAM" id="SSF48334">
    <property type="entry name" value="DNA repair protein MutS, domain III"/>
    <property type="match status" value="1"/>
</dbReference>
<dbReference type="SUPFAM" id="SSF52540">
    <property type="entry name" value="P-loop containing nucleoside triphosphate hydrolases"/>
    <property type="match status" value="1"/>
</dbReference>
<dbReference type="SUPFAM" id="SSF160443">
    <property type="entry name" value="SMR domain-like"/>
    <property type="match status" value="1"/>
</dbReference>
<dbReference type="PROSITE" id="PS00486">
    <property type="entry name" value="DNA_MISMATCH_REPAIR_2"/>
    <property type="match status" value="1"/>
</dbReference>
<dbReference type="PROSITE" id="PS50828">
    <property type="entry name" value="SMR"/>
    <property type="match status" value="1"/>
</dbReference>
<evidence type="ECO:0000255" key="1">
    <source>
        <dbReference type="HAMAP-Rule" id="MF_00092"/>
    </source>
</evidence>
<keyword id="KW-0067">ATP-binding</keyword>
<keyword id="KW-0238">DNA-binding</keyword>
<keyword id="KW-0255">Endonuclease</keyword>
<keyword id="KW-0378">Hydrolase</keyword>
<keyword id="KW-0540">Nuclease</keyword>
<keyword id="KW-0547">Nucleotide-binding</keyword>
<keyword id="KW-1185">Reference proteome</keyword>
<keyword id="KW-0694">RNA-binding</keyword>
<keyword id="KW-0699">rRNA-binding</keyword>
<accession>C1A4A9</accession>
<protein>
    <recommendedName>
        <fullName evidence="1">Endonuclease MutS2</fullName>
        <ecNumber evidence="1">3.1.-.-</ecNumber>
    </recommendedName>
    <alternativeName>
        <fullName evidence="1">Ribosome-associated protein quality control-upstream factor</fullName>
        <shortName evidence="1">RQC-upstream factor</shortName>
        <shortName evidence="1">RqcU</shortName>
        <ecNumber evidence="1">3.6.4.-</ecNumber>
    </alternativeName>
</protein>
<proteinExistence type="inferred from homology"/>
<name>MUTS2_GEMAT</name>
<gene>
    <name evidence="1" type="primary">mutS2</name>
    <name evidence="1" type="synonym">rqcU</name>
    <name type="ordered locus">GAU_1892</name>
</gene>
<sequence length="819" mass="88966">MNAHALGILEFSRLLAHVAGRATSAPGAAAVRALTPRTDREWIEAEHARVRAVRALVASELGWPTEPIPDIGEPLRRLRIEGLSWTALELLQGATLLRSSRRTRATLRDPRRPAIMLAYLVRYAEALVDLEPREQAIERAIGDDGTVRDDASPTLRKVRRDLRETEGQLVRLLEREMGKLEAHHQVSDLSVTMRNGRWVMPMRREARGYVGGIVHDSSGTGATIYVEPPAAVEFGNRVRELEIEEQREVERVLRALTDEIRPYHDAIGGAYDALVALDSLYARARYAIEAQCAPVTFGEPSAGFRIVDGRHPLLLASGGAVVPFDLTLHAGERTMLVSGPNTGGKTVLLKAIGLISMMAQCGVPAPLGETSQLAVFDDLYADVGDEQSIEASLSTFSAHLKNLGEILRSATTSSLVLIDELGSGTDPAEGAALGGAILETLTRRGTLTLATTHLGQLKLLATDVEGVVNASLQFDAVQLAPTYRLLKGVPGRSYGLSIARRLQIDEAVIQRAEERLPSGERDMAVLLADVEAREALLADRERLMEIDQEKLRARLATVGDRELKVREREREAERSARQEARRFLLEARGQVERAIADVKRQAQVEGEAFEETARAARRSIEEAAAEQGEAVAYVGLRGERDRARVDAKRGAAAAAANPSLGRTLRPERGAVAPLGEGDHVIVSTLDGKQGRIVSVRGQDARVAVGSLTVTVPLRTLTRSAAAPVSMYRTPILGDVPEVEPVREVDVRGLRVDEVDDQVLQALDAAVRNDLRELRIIHGKGTGALRSRVSEMLKKDTRVTGFRLGAWNEGGAGVTVAELA</sequence>
<reference key="1">
    <citation type="submission" date="2006-03" db="EMBL/GenBank/DDBJ databases">
        <title>Complete genome sequence of Gemmatimonas aurantiaca T-27 that represents a novel phylum Gemmatimonadetes.</title>
        <authorList>
            <person name="Takasaki K."/>
            <person name="Ichikawa N."/>
            <person name="Miura H."/>
            <person name="Matsushita S."/>
            <person name="Watanabe Y."/>
            <person name="Oguchi A."/>
            <person name="Ankai A."/>
            <person name="Yashiro I."/>
            <person name="Takahashi M."/>
            <person name="Terui Y."/>
            <person name="Fukui S."/>
            <person name="Yokoyama H."/>
            <person name="Tanikawa S."/>
            <person name="Hanada S."/>
            <person name="Kamagata Y."/>
            <person name="Fujita N."/>
        </authorList>
    </citation>
    <scope>NUCLEOTIDE SEQUENCE [LARGE SCALE GENOMIC DNA]</scope>
    <source>
        <strain>DSM 14586 / JCM 11422 / NBRC 100505 / T-27</strain>
    </source>
</reference>
<organism>
    <name type="scientific">Gemmatimonas aurantiaca (strain DSM 14586 / JCM 11422 / NBRC 100505 / T-27)</name>
    <dbReference type="NCBI Taxonomy" id="379066"/>
    <lineage>
        <taxon>Bacteria</taxon>
        <taxon>Pseudomonadati</taxon>
        <taxon>Gemmatimonadota</taxon>
        <taxon>Gemmatimonadia</taxon>
        <taxon>Gemmatimonadales</taxon>
        <taxon>Gemmatimonadaceae</taxon>
        <taxon>Gemmatimonas</taxon>
    </lineage>
</organism>
<comment type="function">
    <text evidence="1">Endonuclease that is involved in the suppression of homologous recombination and thus may have a key role in the control of bacterial genetic diversity.</text>
</comment>
<comment type="function">
    <text evidence="1">Acts as a ribosome collision sensor, splitting the ribosome into its 2 subunits. Detects stalled/collided 70S ribosomes which it binds and splits by an ATP-hydrolysis driven conformational change. Acts upstream of the ribosome quality control system (RQC), a ribosome-associated complex that mediates the extraction of incompletely synthesized nascent chains from stalled ribosomes and their subsequent degradation. Probably generates substrates for RQC.</text>
</comment>
<comment type="subunit">
    <text evidence="1">Homodimer. Binds to stalled ribosomes, contacting rRNA.</text>
</comment>
<comment type="similarity">
    <text evidence="1">Belongs to the DNA mismatch repair MutS family. MutS2 subfamily.</text>
</comment>
<feature type="chain" id="PRO_1000202681" description="Endonuclease MutS2">
    <location>
        <begin position="1"/>
        <end position="819"/>
    </location>
</feature>
<feature type="domain" description="Smr" evidence="1">
    <location>
        <begin position="744"/>
        <end position="819"/>
    </location>
</feature>
<feature type="binding site" evidence="1">
    <location>
        <begin position="339"/>
        <end position="346"/>
    </location>
    <ligand>
        <name>ATP</name>
        <dbReference type="ChEBI" id="CHEBI:30616"/>
    </ligand>
</feature>